<feature type="chain" id="PRO_0000173405" description="Inner membrane transport protein YdiN">
    <location>
        <begin position="1"/>
        <end position="421"/>
    </location>
</feature>
<feature type="topological domain" description="Cytoplasmic" evidence="1">
    <location>
        <begin position="1"/>
        <end position="9"/>
    </location>
</feature>
<feature type="transmembrane region" description="Helical" evidence="1">
    <location>
        <begin position="10"/>
        <end position="30"/>
    </location>
</feature>
<feature type="topological domain" description="Periplasmic" evidence="1">
    <location>
        <begin position="31"/>
        <end position="49"/>
    </location>
</feature>
<feature type="transmembrane region" description="Helical" evidence="1">
    <location>
        <begin position="50"/>
        <end position="70"/>
    </location>
</feature>
<feature type="topological domain" description="Cytoplasmic" evidence="1">
    <location>
        <begin position="71"/>
        <end position="78"/>
    </location>
</feature>
<feature type="transmembrane region" description="Helical" evidence="1">
    <location>
        <begin position="79"/>
        <end position="99"/>
    </location>
</feature>
<feature type="topological domain" description="Periplasmic" evidence="1">
    <location>
        <position position="100"/>
    </location>
</feature>
<feature type="transmembrane region" description="Helical" evidence="1">
    <location>
        <begin position="101"/>
        <end position="121"/>
    </location>
</feature>
<feature type="topological domain" description="Cytoplasmic" evidence="1">
    <location>
        <begin position="122"/>
        <end position="136"/>
    </location>
</feature>
<feature type="transmembrane region" description="Helical" evidence="1">
    <location>
        <begin position="137"/>
        <end position="157"/>
    </location>
</feature>
<feature type="topological domain" description="Periplasmic" evidence="1">
    <location>
        <begin position="158"/>
        <end position="163"/>
    </location>
</feature>
<feature type="transmembrane region" description="Helical" evidence="1">
    <location>
        <begin position="164"/>
        <end position="184"/>
    </location>
</feature>
<feature type="topological domain" description="Cytoplasmic" evidence="1">
    <location>
        <begin position="185"/>
        <end position="215"/>
    </location>
</feature>
<feature type="transmembrane region" description="Helical" evidence="1">
    <location>
        <begin position="216"/>
        <end position="236"/>
    </location>
</feature>
<feature type="topological domain" description="Periplasmic" evidence="1">
    <location>
        <begin position="237"/>
        <end position="251"/>
    </location>
</feature>
<feature type="transmembrane region" description="Helical" evidence="1">
    <location>
        <begin position="252"/>
        <end position="272"/>
    </location>
</feature>
<feature type="topological domain" description="Cytoplasmic" evidence="1">
    <location>
        <begin position="273"/>
        <end position="279"/>
    </location>
</feature>
<feature type="transmembrane region" description="Helical" evidence="1">
    <location>
        <begin position="280"/>
        <end position="300"/>
    </location>
</feature>
<feature type="topological domain" description="Periplasmic" evidence="1">
    <location>
        <begin position="301"/>
        <end position="308"/>
    </location>
</feature>
<feature type="transmembrane region" description="Helical" evidence="1">
    <location>
        <begin position="309"/>
        <end position="329"/>
    </location>
</feature>
<feature type="topological domain" description="Cytoplasmic" evidence="1">
    <location>
        <begin position="330"/>
        <end position="342"/>
    </location>
</feature>
<feature type="transmembrane region" description="Helical" evidence="1">
    <location>
        <begin position="343"/>
        <end position="363"/>
    </location>
</feature>
<feature type="topological domain" description="Periplasmic" evidence="1">
    <location>
        <begin position="364"/>
        <end position="369"/>
    </location>
</feature>
<feature type="transmembrane region" description="Helical" evidence="1">
    <location>
        <begin position="370"/>
        <end position="390"/>
    </location>
</feature>
<feature type="topological domain" description="Cytoplasmic" evidence="1">
    <location>
        <begin position="391"/>
        <end position="421"/>
    </location>
</feature>
<accession>P76198</accession>
<accession>Q2MB52</accession>
<reference key="1">
    <citation type="journal article" date="1997" name="Science">
        <title>The complete genome sequence of Escherichia coli K-12.</title>
        <authorList>
            <person name="Blattner F.R."/>
            <person name="Plunkett G. III"/>
            <person name="Bloch C.A."/>
            <person name="Perna N.T."/>
            <person name="Burland V."/>
            <person name="Riley M."/>
            <person name="Collado-Vides J."/>
            <person name="Glasner J.D."/>
            <person name="Rode C.K."/>
            <person name="Mayhew G.F."/>
            <person name="Gregor J."/>
            <person name="Davis N.W."/>
            <person name="Kirkpatrick H.A."/>
            <person name="Goeden M.A."/>
            <person name="Rose D.J."/>
            <person name="Mau B."/>
            <person name="Shao Y."/>
        </authorList>
    </citation>
    <scope>NUCLEOTIDE SEQUENCE [LARGE SCALE GENOMIC DNA]</scope>
    <source>
        <strain>K12 / MG1655 / ATCC 47076</strain>
    </source>
</reference>
<reference key="2">
    <citation type="journal article" date="2006" name="Mol. Syst. Biol.">
        <title>Highly accurate genome sequences of Escherichia coli K-12 strains MG1655 and W3110.</title>
        <authorList>
            <person name="Hayashi K."/>
            <person name="Morooka N."/>
            <person name="Yamamoto Y."/>
            <person name="Fujita K."/>
            <person name="Isono K."/>
            <person name="Choi S."/>
            <person name="Ohtsubo E."/>
            <person name="Baba T."/>
            <person name="Wanner B.L."/>
            <person name="Mori H."/>
            <person name="Horiuchi T."/>
        </authorList>
    </citation>
    <scope>NUCLEOTIDE SEQUENCE [LARGE SCALE GENOMIC DNA]</scope>
    <source>
        <strain>K12 / W3110 / ATCC 27325 / DSM 5911</strain>
    </source>
</reference>
<reference key="3">
    <citation type="journal article" date="2005" name="Science">
        <title>Global topology analysis of the Escherichia coli inner membrane proteome.</title>
        <authorList>
            <person name="Daley D.O."/>
            <person name="Rapp M."/>
            <person name="Granseth E."/>
            <person name="Melen K."/>
            <person name="Drew D."/>
            <person name="von Heijne G."/>
        </authorList>
    </citation>
    <scope>TOPOLOGY [LARGE SCALE ANALYSIS]</scope>
    <source>
        <strain>K12 / MG1655 / ATCC 47076</strain>
    </source>
</reference>
<comment type="subcellular location">
    <subcellularLocation>
        <location>Cell inner membrane</location>
        <topology>Multi-pass membrane protein</topology>
    </subcellularLocation>
</comment>
<comment type="similarity">
    <text evidence="2">Belongs to the major facilitator superfamily.</text>
</comment>
<sequence>MSQNKAFSTPFILAVLCIYFSYFLHGISVITLAQNMSSLAEKFSTDNAGIAYLISGIGLGRLISILFFGVISDKFGRRAVILMAVIMYLLFFFGIPACPNLTLAYGLAVCVGIANSALDTGGYPALMECFPKASGSAVILVKAMVSFGQMFYPMLVSYMLLNNIWYGYGLIIPGILFVLITLMLLKSKFPSQLVDASVTNELPQMNSKPLVWLEGVSSVLFGVAAFSTFYVIVVWMPKYAMAFAGMSEAEALKTISYYSMGSLVCVFIFAALLKKMVRPIWANVFNSALATITAAIIYLYPSPLVCNAGAFVIGFSAAGGILQLGVSVMSEFFPKSKAKVTSIYMMMGGLANFVIPLITGYLSNIGLQYIIVLDFTFALLALITAIIVFIRYYRVFIIPENDVRFGERKFCTRLNTIKHRG</sequence>
<evidence type="ECO:0000255" key="1"/>
<evidence type="ECO:0000305" key="2"/>
<dbReference type="EMBL" id="U00096">
    <property type="protein sequence ID" value="AAC74761.4"/>
    <property type="molecule type" value="Genomic_DNA"/>
</dbReference>
<dbReference type="EMBL" id="AP009048">
    <property type="protein sequence ID" value="BAE76504.1"/>
    <property type="molecule type" value="Genomic_DNA"/>
</dbReference>
<dbReference type="PIR" id="C64927">
    <property type="entry name" value="C64927"/>
</dbReference>
<dbReference type="RefSeq" id="NP_416206.6">
    <property type="nucleotide sequence ID" value="NC_000913.3"/>
</dbReference>
<dbReference type="RefSeq" id="WP_000081197.1">
    <property type="nucleotide sequence ID" value="NZ_SSZK01000001.1"/>
</dbReference>
<dbReference type="SMR" id="P76198"/>
<dbReference type="BioGRID" id="4259454">
    <property type="interactions" value="165"/>
</dbReference>
<dbReference type="FunCoup" id="P76198">
    <property type="interactions" value="42"/>
</dbReference>
<dbReference type="STRING" id="511145.b1691"/>
<dbReference type="TCDB" id="2.A.1.15.13">
    <property type="family name" value="the major facilitator superfamily (mfs)"/>
</dbReference>
<dbReference type="PaxDb" id="511145-b1691"/>
<dbReference type="EnsemblBacteria" id="AAC74761">
    <property type="protein sequence ID" value="AAC74761"/>
    <property type="gene ID" value="b1691"/>
</dbReference>
<dbReference type="GeneID" id="946198"/>
<dbReference type="KEGG" id="ecj:JW5274"/>
<dbReference type="KEGG" id="eco:b1691"/>
<dbReference type="KEGG" id="ecoc:C3026_09685"/>
<dbReference type="PATRIC" id="fig|1411691.4.peg.567"/>
<dbReference type="EchoBASE" id="EB3730"/>
<dbReference type="eggNOG" id="COG2271">
    <property type="taxonomic scope" value="Bacteria"/>
</dbReference>
<dbReference type="HOGENOM" id="CLU_045105_0_1_6"/>
<dbReference type="InParanoid" id="P76198"/>
<dbReference type="OMA" id="SRYYRVF"/>
<dbReference type="OrthoDB" id="7066727at2"/>
<dbReference type="PhylomeDB" id="P76198"/>
<dbReference type="BioCyc" id="EcoCyc:B1691-MONOMER"/>
<dbReference type="PRO" id="PR:P76198"/>
<dbReference type="Proteomes" id="UP000000625">
    <property type="component" value="Chromosome"/>
</dbReference>
<dbReference type="GO" id="GO:0016020">
    <property type="term" value="C:membrane"/>
    <property type="evidence" value="ECO:0000318"/>
    <property type="project" value="GO_Central"/>
</dbReference>
<dbReference type="GO" id="GO:0005886">
    <property type="term" value="C:plasma membrane"/>
    <property type="evidence" value="ECO:0000314"/>
    <property type="project" value="EcoCyc"/>
</dbReference>
<dbReference type="GO" id="GO:0022857">
    <property type="term" value="F:transmembrane transporter activity"/>
    <property type="evidence" value="ECO:0007669"/>
    <property type="project" value="InterPro"/>
</dbReference>
<dbReference type="CDD" id="cd17396">
    <property type="entry name" value="MFS_YdiM_like"/>
    <property type="match status" value="1"/>
</dbReference>
<dbReference type="FunFam" id="1.20.1250.20:FF:000248">
    <property type="entry name" value="Inner membrane transporter ydiN"/>
    <property type="match status" value="1"/>
</dbReference>
<dbReference type="FunFam" id="1.20.1250.20:FF:000135">
    <property type="entry name" value="MFS family transporter"/>
    <property type="match status" value="1"/>
</dbReference>
<dbReference type="Gene3D" id="1.20.1250.20">
    <property type="entry name" value="MFS general substrate transporter like domains"/>
    <property type="match status" value="2"/>
</dbReference>
<dbReference type="InterPro" id="IPR011701">
    <property type="entry name" value="MFS"/>
</dbReference>
<dbReference type="InterPro" id="IPR020846">
    <property type="entry name" value="MFS_dom"/>
</dbReference>
<dbReference type="InterPro" id="IPR036259">
    <property type="entry name" value="MFS_trans_sf"/>
</dbReference>
<dbReference type="InterPro" id="IPR051788">
    <property type="entry name" value="MFS_Transporter"/>
</dbReference>
<dbReference type="PANTHER" id="PTHR23514">
    <property type="entry name" value="BYPASS OF STOP CODON PROTEIN 6"/>
    <property type="match status" value="1"/>
</dbReference>
<dbReference type="PANTHER" id="PTHR23514:SF3">
    <property type="entry name" value="BYPASS OF STOP CODON PROTEIN 6"/>
    <property type="match status" value="1"/>
</dbReference>
<dbReference type="Pfam" id="PF07690">
    <property type="entry name" value="MFS_1"/>
    <property type="match status" value="1"/>
</dbReference>
<dbReference type="SUPFAM" id="SSF103473">
    <property type="entry name" value="MFS general substrate transporter"/>
    <property type="match status" value="1"/>
</dbReference>
<dbReference type="PROSITE" id="PS50850">
    <property type="entry name" value="MFS"/>
    <property type="match status" value="1"/>
</dbReference>
<name>YDIN_ECOLI</name>
<organism>
    <name type="scientific">Escherichia coli (strain K12)</name>
    <dbReference type="NCBI Taxonomy" id="83333"/>
    <lineage>
        <taxon>Bacteria</taxon>
        <taxon>Pseudomonadati</taxon>
        <taxon>Pseudomonadota</taxon>
        <taxon>Gammaproteobacteria</taxon>
        <taxon>Enterobacterales</taxon>
        <taxon>Enterobacteriaceae</taxon>
        <taxon>Escherichia</taxon>
    </lineage>
</organism>
<protein>
    <recommendedName>
        <fullName>Inner membrane transport protein YdiN</fullName>
    </recommendedName>
</protein>
<proteinExistence type="evidence at protein level"/>
<gene>
    <name type="primary">ydiN</name>
    <name type="ordered locus">b1691</name>
    <name type="ordered locus">JW5274</name>
</gene>
<keyword id="KW-0997">Cell inner membrane</keyword>
<keyword id="KW-1003">Cell membrane</keyword>
<keyword id="KW-0472">Membrane</keyword>
<keyword id="KW-1185">Reference proteome</keyword>
<keyword id="KW-0812">Transmembrane</keyword>
<keyword id="KW-1133">Transmembrane helix</keyword>
<keyword id="KW-0813">Transport</keyword>